<sequence>MATAWGLRWGLSRTGTLLLAPPARCARRALHRQVDGTTFQSIYSLDKLYPESKGADTAWKVPEHAKQASSYIPLDRLSISYCRSSGPGGQNVNKVNSKAEVRFHLASADWIEEPVRQKIALTHKNKINKAGELVLTSESSRYQFRNLAECLQKIRDMIAEASQVPKEPSKEDARLQRLRIEKMNRERLRQKRLNSALKTSRRMTMD</sequence>
<organism>
    <name type="scientific">Mus musculus</name>
    <name type="common">Mouse</name>
    <dbReference type="NCBI Taxonomy" id="10090"/>
    <lineage>
        <taxon>Eukaryota</taxon>
        <taxon>Metazoa</taxon>
        <taxon>Chordata</taxon>
        <taxon>Craniata</taxon>
        <taxon>Vertebrata</taxon>
        <taxon>Euteleostomi</taxon>
        <taxon>Mammalia</taxon>
        <taxon>Eutheria</taxon>
        <taxon>Euarchontoglires</taxon>
        <taxon>Glires</taxon>
        <taxon>Rodentia</taxon>
        <taxon>Myomorpha</taxon>
        <taxon>Muroidea</taxon>
        <taxon>Muridae</taxon>
        <taxon>Murinae</taxon>
        <taxon>Mus</taxon>
        <taxon>Mus</taxon>
    </lineage>
</organism>
<proteinExistence type="evidence at protein level"/>
<evidence type="ECO:0000250" key="1">
    <source>
        <dbReference type="UniProtKB" id="Q14197"/>
    </source>
</evidence>
<evidence type="ECO:0000255" key="2"/>
<evidence type="ECO:0000269" key="3">
    <source>
    </source>
</evidence>
<evidence type="ECO:0000303" key="4">
    <source>
    </source>
</evidence>
<evidence type="ECO:0000305" key="5"/>
<evidence type="ECO:0000312" key="6">
    <source>
        <dbReference type="MGI" id="MGI:1915822"/>
    </source>
</evidence>
<evidence type="ECO:0007829" key="7">
    <source>
        <dbReference type="PDB" id="1J26"/>
    </source>
</evidence>
<reference key="1">
    <citation type="journal article" date="2005" name="Science">
        <title>The transcriptional landscape of the mammalian genome.</title>
        <authorList>
            <person name="Carninci P."/>
            <person name="Kasukawa T."/>
            <person name="Katayama S."/>
            <person name="Gough J."/>
            <person name="Frith M.C."/>
            <person name="Maeda N."/>
            <person name="Oyama R."/>
            <person name="Ravasi T."/>
            <person name="Lenhard B."/>
            <person name="Wells C."/>
            <person name="Kodzius R."/>
            <person name="Shimokawa K."/>
            <person name="Bajic V.B."/>
            <person name="Brenner S.E."/>
            <person name="Batalov S."/>
            <person name="Forrest A.R."/>
            <person name="Zavolan M."/>
            <person name="Davis M.J."/>
            <person name="Wilming L.G."/>
            <person name="Aidinis V."/>
            <person name="Allen J.E."/>
            <person name="Ambesi-Impiombato A."/>
            <person name="Apweiler R."/>
            <person name="Aturaliya R.N."/>
            <person name="Bailey T.L."/>
            <person name="Bansal M."/>
            <person name="Baxter L."/>
            <person name="Beisel K.W."/>
            <person name="Bersano T."/>
            <person name="Bono H."/>
            <person name="Chalk A.M."/>
            <person name="Chiu K.P."/>
            <person name="Choudhary V."/>
            <person name="Christoffels A."/>
            <person name="Clutterbuck D.R."/>
            <person name="Crowe M.L."/>
            <person name="Dalla E."/>
            <person name="Dalrymple B.P."/>
            <person name="de Bono B."/>
            <person name="Della Gatta G."/>
            <person name="di Bernardo D."/>
            <person name="Down T."/>
            <person name="Engstrom P."/>
            <person name="Fagiolini M."/>
            <person name="Faulkner G."/>
            <person name="Fletcher C.F."/>
            <person name="Fukushima T."/>
            <person name="Furuno M."/>
            <person name="Futaki S."/>
            <person name="Gariboldi M."/>
            <person name="Georgii-Hemming P."/>
            <person name="Gingeras T.R."/>
            <person name="Gojobori T."/>
            <person name="Green R.E."/>
            <person name="Gustincich S."/>
            <person name="Harbers M."/>
            <person name="Hayashi Y."/>
            <person name="Hensch T.K."/>
            <person name="Hirokawa N."/>
            <person name="Hill D."/>
            <person name="Huminiecki L."/>
            <person name="Iacono M."/>
            <person name="Ikeo K."/>
            <person name="Iwama A."/>
            <person name="Ishikawa T."/>
            <person name="Jakt M."/>
            <person name="Kanapin A."/>
            <person name="Katoh M."/>
            <person name="Kawasawa Y."/>
            <person name="Kelso J."/>
            <person name="Kitamura H."/>
            <person name="Kitano H."/>
            <person name="Kollias G."/>
            <person name="Krishnan S.P."/>
            <person name="Kruger A."/>
            <person name="Kummerfeld S.K."/>
            <person name="Kurochkin I.V."/>
            <person name="Lareau L.F."/>
            <person name="Lazarevic D."/>
            <person name="Lipovich L."/>
            <person name="Liu J."/>
            <person name="Liuni S."/>
            <person name="McWilliam S."/>
            <person name="Madan Babu M."/>
            <person name="Madera M."/>
            <person name="Marchionni L."/>
            <person name="Matsuda H."/>
            <person name="Matsuzawa S."/>
            <person name="Miki H."/>
            <person name="Mignone F."/>
            <person name="Miyake S."/>
            <person name="Morris K."/>
            <person name="Mottagui-Tabar S."/>
            <person name="Mulder N."/>
            <person name="Nakano N."/>
            <person name="Nakauchi H."/>
            <person name="Ng P."/>
            <person name="Nilsson R."/>
            <person name="Nishiguchi S."/>
            <person name="Nishikawa S."/>
            <person name="Nori F."/>
            <person name="Ohara O."/>
            <person name="Okazaki Y."/>
            <person name="Orlando V."/>
            <person name="Pang K.C."/>
            <person name="Pavan W.J."/>
            <person name="Pavesi G."/>
            <person name="Pesole G."/>
            <person name="Petrovsky N."/>
            <person name="Piazza S."/>
            <person name="Reed J."/>
            <person name="Reid J.F."/>
            <person name="Ring B.Z."/>
            <person name="Ringwald M."/>
            <person name="Rost B."/>
            <person name="Ruan Y."/>
            <person name="Salzberg S.L."/>
            <person name="Sandelin A."/>
            <person name="Schneider C."/>
            <person name="Schoenbach C."/>
            <person name="Sekiguchi K."/>
            <person name="Semple C.A."/>
            <person name="Seno S."/>
            <person name="Sessa L."/>
            <person name="Sheng Y."/>
            <person name="Shibata Y."/>
            <person name="Shimada H."/>
            <person name="Shimada K."/>
            <person name="Silva D."/>
            <person name="Sinclair B."/>
            <person name="Sperling S."/>
            <person name="Stupka E."/>
            <person name="Sugiura K."/>
            <person name="Sultana R."/>
            <person name="Takenaka Y."/>
            <person name="Taki K."/>
            <person name="Tammoja K."/>
            <person name="Tan S.L."/>
            <person name="Tang S."/>
            <person name="Taylor M.S."/>
            <person name="Tegner J."/>
            <person name="Teichmann S.A."/>
            <person name="Ueda H.R."/>
            <person name="van Nimwegen E."/>
            <person name="Verardo R."/>
            <person name="Wei C.L."/>
            <person name="Yagi K."/>
            <person name="Yamanishi H."/>
            <person name="Zabarovsky E."/>
            <person name="Zhu S."/>
            <person name="Zimmer A."/>
            <person name="Hide W."/>
            <person name="Bult C."/>
            <person name="Grimmond S.M."/>
            <person name="Teasdale R.D."/>
            <person name="Liu E.T."/>
            <person name="Brusic V."/>
            <person name="Quackenbush J."/>
            <person name="Wahlestedt C."/>
            <person name="Mattick J.S."/>
            <person name="Hume D.A."/>
            <person name="Kai C."/>
            <person name="Sasaki D."/>
            <person name="Tomaru Y."/>
            <person name="Fukuda S."/>
            <person name="Kanamori-Katayama M."/>
            <person name="Suzuki M."/>
            <person name="Aoki J."/>
            <person name="Arakawa T."/>
            <person name="Iida J."/>
            <person name="Imamura K."/>
            <person name="Itoh M."/>
            <person name="Kato T."/>
            <person name="Kawaji H."/>
            <person name="Kawagashira N."/>
            <person name="Kawashima T."/>
            <person name="Kojima M."/>
            <person name="Kondo S."/>
            <person name="Konno H."/>
            <person name="Nakano K."/>
            <person name="Ninomiya N."/>
            <person name="Nishio T."/>
            <person name="Okada M."/>
            <person name="Plessy C."/>
            <person name="Shibata K."/>
            <person name="Shiraki T."/>
            <person name="Suzuki S."/>
            <person name="Tagami M."/>
            <person name="Waki K."/>
            <person name="Watahiki A."/>
            <person name="Okamura-Oho Y."/>
            <person name="Suzuki H."/>
            <person name="Kawai J."/>
            <person name="Hayashizaki Y."/>
        </authorList>
    </citation>
    <scope>NUCLEOTIDE SEQUENCE [LARGE SCALE MRNA] (ISOFORM 2)</scope>
    <scope>NUCLEOTIDE SEQUENCE [LARGE SCALE MRNA] OF 37-206 (ISOFORM 1)</scope>
    <source>
        <strain>C57BL/6J</strain>
        <tissue>Embryo</tissue>
        <tissue>Head</tissue>
    </source>
</reference>
<reference key="2">
    <citation type="journal article" date="2009" name="PLoS Biol.">
        <title>Lineage-specific biology revealed by a finished genome assembly of the mouse.</title>
        <authorList>
            <person name="Church D.M."/>
            <person name="Goodstadt L."/>
            <person name="Hillier L.W."/>
            <person name="Zody M.C."/>
            <person name="Goldstein S."/>
            <person name="She X."/>
            <person name="Bult C.J."/>
            <person name="Agarwala R."/>
            <person name="Cherry J.L."/>
            <person name="DiCuccio M."/>
            <person name="Hlavina W."/>
            <person name="Kapustin Y."/>
            <person name="Meric P."/>
            <person name="Maglott D."/>
            <person name="Birtle Z."/>
            <person name="Marques A.C."/>
            <person name="Graves T."/>
            <person name="Zhou S."/>
            <person name="Teague B."/>
            <person name="Potamousis K."/>
            <person name="Churas C."/>
            <person name="Place M."/>
            <person name="Herschleb J."/>
            <person name="Runnheim R."/>
            <person name="Forrest D."/>
            <person name="Amos-Landgraf J."/>
            <person name="Schwartz D.C."/>
            <person name="Cheng Z."/>
            <person name="Lindblad-Toh K."/>
            <person name="Eichler E.E."/>
            <person name="Ponting C.P."/>
        </authorList>
    </citation>
    <scope>NUCLEOTIDE SEQUENCE [LARGE SCALE GENOMIC DNA]</scope>
    <source>
        <strain>C57BL/6J</strain>
    </source>
</reference>
<reference key="3">
    <citation type="submission" date="2005-07" db="EMBL/GenBank/DDBJ databases">
        <authorList>
            <person name="Mural R.J."/>
            <person name="Adams M.D."/>
            <person name="Myers E.W."/>
            <person name="Smith H.O."/>
            <person name="Venter J.C."/>
        </authorList>
    </citation>
    <scope>NUCLEOTIDE SEQUENCE [LARGE SCALE GENOMIC DNA]</scope>
</reference>
<reference key="4">
    <citation type="journal article" date="2004" name="Genome Res.">
        <title>The status, quality, and expansion of the NIH full-length cDNA project: the Mammalian Gene Collection (MGC).</title>
        <authorList>
            <consortium name="The MGC Project Team"/>
        </authorList>
    </citation>
    <scope>NUCLEOTIDE SEQUENCE [LARGE SCALE MRNA] (ISOFORM 1)</scope>
    <source>
        <strain>Czech II</strain>
        <tissue>Lung</tissue>
    </source>
</reference>
<reference key="5">
    <citation type="journal article" date="2010" name="Cell">
        <title>A tissue-specific atlas of mouse protein phosphorylation and expression.</title>
        <authorList>
            <person name="Huttlin E.L."/>
            <person name="Jedrychowski M.P."/>
            <person name="Elias J.E."/>
            <person name="Goswami T."/>
            <person name="Rad R."/>
            <person name="Beausoleil S.A."/>
            <person name="Villen J."/>
            <person name="Haas W."/>
            <person name="Sowa M.E."/>
            <person name="Gygi S.P."/>
        </authorList>
    </citation>
    <scope>IDENTIFICATION BY MASS SPECTROMETRY [LARGE SCALE ANALYSIS]</scope>
    <source>
        <tissue>Brain</tissue>
        <tissue>Brown adipose tissue</tissue>
        <tissue>Heart</tissue>
        <tissue>Kidney</tissue>
        <tissue>Liver</tissue>
        <tissue>Pancreas</tissue>
        <tissue>Spleen</tissue>
        <tissue>Testis</tissue>
    </source>
</reference>
<reference key="6">
    <citation type="journal article" date="2010" name="J. Mol. Biol.">
        <title>Solution structure of the catalytic domain of the mitochondrial protein ICT1 that is essential for cell vitality.</title>
        <authorList>
            <person name="Handa Y."/>
            <person name="Hikawa Y."/>
            <person name="Tochio N."/>
            <person name="Kogure H."/>
            <person name="Inoue M."/>
            <person name="Koshiba S."/>
            <person name="Guntert P."/>
            <person name="Inoue Y."/>
            <person name="Kigawa T."/>
            <person name="Yokoyama S."/>
            <person name="Nameki N."/>
        </authorList>
    </citation>
    <scope>STRUCTURE BY NMR OF 63-162</scope>
    <scope>FUNCTION</scope>
</reference>
<protein>
    <recommendedName>
        <fullName evidence="5">Large ribosomal subunit protein mL62</fullName>
    </recommendedName>
    <alternativeName>
        <fullName evidence="6">39S ribosomal protein L58, mitochondrial</fullName>
        <shortName>MRP-L58</shortName>
    </alternativeName>
    <alternativeName>
        <fullName>Immature colon carcinoma transcript 1 protein homolog</fullName>
    </alternativeName>
    <alternativeName>
        <fullName>Peptidyl-tRNA hydrolase ICT1, mitochondrial</fullName>
        <ecNumber>3.1.1.29</ecNumber>
    </alternativeName>
</protein>
<feature type="transit peptide" description="Mitochondrion" evidence="2">
    <location>
        <begin position="1"/>
        <end position="29"/>
    </location>
</feature>
<feature type="chain" id="PRO_0000030340" description="Large ribosomal subunit protein mL62">
    <location>
        <begin position="30"/>
        <end position="206"/>
    </location>
</feature>
<feature type="modified residue" description="N5-methylglutamine" evidence="1">
    <location>
        <position position="90"/>
    </location>
</feature>
<feature type="splice variant" id="VSP_014374" description="In isoform 2." evidence="4">
    <location>
        <begin position="34"/>
        <end position="62"/>
    </location>
</feature>
<feature type="turn" evidence="7">
    <location>
        <begin position="74"/>
        <end position="76"/>
    </location>
</feature>
<feature type="strand" evidence="7">
    <location>
        <begin position="77"/>
        <end position="82"/>
    </location>
</feature>
<feature type="strand" evidence="7">
    <location>
        <begin position="87"/>
        <end position="90"/>
    </location>
</feature>
<feature type="strand" evidence="7">
    <location>
        <begin position="98"/>
        <end position="104"/>
    </location>
</feature>
<feature type="helix" evidence="7">
    <location>
        <begin position="105"/>
        <end position="107"/>
    </location>
</feature>
<feature type="helix" evidence="7">
    <location>
        <begin position="113"/>
        <end position="122"/>
    </location>
</feature>
<feature type="turn" evidence="7">
    <location>
        <begin position="123"/>
        <end position="126"/>
    </location>
</feature>
<feature type="strand" evidence="7">
    <location>
        <begin position="129"/>
        <end position="137"/>
    </location>
</feature>
<feature type="helix" evidence="7">
    <location>
        <begin position="143"/>
        <end position="161"/>
    </location>
</feature>
<name>ICT1_MOUSE</name>
<keyword id="KW-0002">3D-structure</keyword>
<keyword id="KW-0025">Alternative splicing</keyword>
<keyword id="KW-0378">Hydrolase</keyword>
<keyword id="KW-0488">Methylation</keyword>
<keyword id="KW-0496">Mitochondrion</keyword>
<keyword id="KW-0648">Protein biosynthesis</keyword>
<keyword id="KW-1185">Reference proteome</keyword>
<keyword id="KW-0687">Ribonucleoprotein</keyword>
<keyword id="KW-0689">Ribosomal protein</keyword>
<keyword id="KW-0809">Transit peptide</keyword>
<gene>
    <name evidence="6" type="primary">Mrpl58</name>
    <name type="synonym">Ict1</name>
</gene>
<dbReference type="EC" id="3.1.1.29"/>
<dbReference type="EMBL" id="AK003192">
    <property type="protein sequence ID" value="BAB22632.1"/>
    <property type="molecule type" value="mRNA"/>
</dbReference>
<dbReference type="EMBL" id="AK003286">
    <property type="protein sequence ID" value="BAB22691.1"/>
    <property type="molecule type" value="mRNA"/>
</dbReference>
<dbReference type="EMBL" id="AK160697">
    <property type="protein sequence ID" value="BAE35961.1"/>
    <property type="molecule type" value="mRNA"/>
</dbReference>
<dbReference type="EMBL" id="AL603828">
    <property type="status" value="NOT_ANNOTATED_CDS"/>
    <property type="molecule type" value="Genomic_DNA"/>
</dbReference>
<dbReference type="EMBL" id="AL627096">
    <property type="status" value="NOT_ANNOTATED_CDS"/>
    <property type="molecule type" value="Genomic_DNA"/>
</dbReference>
<dbReference type="EMBL" id="CH466558">
    <property type="protein sequence ID" value="EDL34481.1"/>
    <property type="molecule type" value="Genomic_DNA"/>
</dbReference>
<dbReference type="EMBL" id="CH466558">
    <property type="protein sequence ID" value="EDL34486.1"/>
    <property type="molecule type" value="Genomic_DNA"/>
</dbReference>
<dbReference type="EMBL" id="BC028523">
    <property type="protein sequence ID" value="AAH28523.1"/>
    <property type="molecule type" value="mRNA"/>
</dbReference>
<dbReference type="CCDS" id="CCDS25632.1">
    <molecule id="Q8R035-2"/>
</dbReference>
<dbReference type="CCDS" id="CCDS83928.1">
    <molecule id="Q8R035-1"/>
</dbReference>
<dbReference type="RefSeq" id="NP_001334574.1">
    <molecule id="Q8R035-1"/>
    <property type="nucleotide sequence ID" value="NM_001347645.1"/>
</dbReference>
<dbReference type="RefSeq" id="NP_081005.1">
    <molecule id="Q8R035-2"/>
    <property type="nucleotide sequence ID" value="NM_026729.2"/>
</dbReference>
<dbReference type="PDB" id="1J26">
    <property type="method" value="NMR"/>
    <property type="chains" value="A=63-161"/>
</dbReference>
<dbReference type="PDBsum" id="1J26"/>
<dbReference type="BMRB" id="Q8R035"/>
<dbReference type="SMR" id="Q8R035"/>
<dbReference type="BioGRID" id="212934">
    <property type="interactions" value="88"/>
</dbReference>
<dbReference type="ComplexPortal" id="CPX-5302">
    <property type="entry name" value="39S mitochondrial large ribosomal subunit"/>
</dbReference>
<dbReference type="FunCoup" id="Q8R035">
    <property type="interactions" value="2429"/>
</dbReference>
<dbReference type="STRING" id="10090.ENSMUSP00000116746"/>
<dbReference type="iPTMnet" id="Q8R035"/>
<dbReference type="PhosphoSitePlus" id="Q8R035"/>
<dbReference type="jPOST" id="Q8R035"/>
<dbReference type="PaxDb" id="10090-ENSMUSP00000116746"/>
<dbReference type="PeptideAtlas" id="Q8R035"/>
<dbReference type="ProteomicsDB" id="267187">
    <molecule id="Q8R035-1"/>
</dbReference>
<dbReference type="ProteomicsDB" id="267188">
    <molecule id="Q8R035-2"/>
</dbReference>
<dbReference type="Pumba" id="Q8R035"/>
<dbReference type="Antibodypedia" id="1066">
    <property type="antibodies" value="335 antibodies from 30 providers"/>
</dbReference>
<dbReference type="DNASU" id="68572"/>
<dbReference type="Ensembl" id="ENSMUST00000103036.5">
    <molecule id="Q8R035-2"/>
    <property type="protein sequence ID" value="ENSMUSP00000099325.5"/>
    <property type="gene ID" value="ENSMUSG00000018858.16"/>
</dbReference>
<dbReference type="Ensembl" id="ENSMUST00000153983.8">
    <molecule id="Q8R035-1"/>
    <property type="protein sequence ID" value="ENSMUSP00000116746.2"/>
    <property type="gene ID" value="ENSMUSG00000018858.16"/>
</dbReference>
<dbReference type="GeneID" id="68572"/>
<dbReference type="KEGG" id="mmu:68572"/>
<dbReference type="UCSC" id="uc007mhj.1">
    <molecule id="Q8R035-1"/>
    <property type="organism name" value="mouse"/>
</dbReference>
<dbReference type="UCSC" id="uc007mhl.1">
    <molecule id="Q8R035-2"/>
    <property type="organism name" value="mouse"/>
</dbReference>
<dbReference type="AGR" id="MGI:1915822"/>
<dbReference type="CTD" id="3396"/>
<dbReference type="MGI" id="MGI:1915822">
    <property type="gene designation" value="Mrpl58"/>
</dbReference>
<dbReference type="VEuPathDB" id="HostDB:ENSMUSG00000018858"/>
<dbReference type="eggNOG" id="KOG3429">
    <property type="taxonomic scope" value="Eukaryota"/>
</dbReference>
<dbReference type="GeneTree" id="ENSGT00390000013268"/>
<dbReference type="HOGENOM" id="CLU_089470_6_1_1"/>
<dbReference type="InParanoid" id="Q8R035"/>
<dbReference type="OMA" id="GGQNVNC"/>
<dbReference type="OrthoDB" id="270639at2759"/>
<dbReference type="PhylomeDB" id="Q8R035"/>
<dbReference type="TreeFam" id="TF315161"/>
<dbReference type="Reactome" id="R-MMU-5389840">
    <property type="pathway name" value="Mitochondrial translation elongation"/>
</dbReference>
<dbReference type="Reactome" id="R-MMU-5419276">
    <property type="pathway name" value="Mitochondrial translation termination"/>
</dbReference>
<dbReference type="BioGRID-ORCS" id="68572">
    <property type="hits" value="4 hits in 63 CRISPR screens"/>
</dbReference>
<dbReference type="EvolutionaryTrace" id="Q8R035"/>
<dbReference type="PRO" id="PR:Q8R035"/>
<dbReference type="Proteomes" id="UP000000589">
    <property type="component" value="Chromosome 11"/>
</dbReference>
<dbReference type="RNAct" id="Q8R035">
    <property type="molecule type" value="protein"/>
</dbReference>
<dbReference type="Bgee" id="ENSMUSG00000018858">
    <property type="expression patterns" value="Expressed in thymus and 266 other cell types or tissues"/>
</dbReference>
<dbReference type="ExpressionAtlas" id="Q8R035">
    <property type="expression patterns" value="baseline and differential"/>
</dbReference>
<dbReference type="GO" id="GO:0005743">
    <property type="term" value="C:mitochondrial inner membrane"/>
    <property type="evidence" value="ECO:0000303"/>
    <property type="project" value="ComplexPortal"/>
</dbReference>
<dbReference type="GO" id="GO:0005762">
    <property type="term" value="C:mitochondrial large ribosomal subunit"/>
    <property type="evidence" value="ECO:0000250"/>
    <property type="project" value="UniProtKB"/>
</dbReference>
<dbReference type="GO" id="GO:0005739">
    <property type="term" value="C:mitochondrion"/>
    <property type="evidence" value="ECO:0007005"/>
    <property type="project" value="MGI"/>
</dbReference>
<dbReference type="GO" id="GO:0005654">
    <property type="term" value="C:nucleoplasm"/>
    <property type="evidence" value="ECO:0007669"/>
    <property type="project" value="Ensembl"/>
</dbReference>
<dbReference type="GO" id="GO:0005886">
    <property type="term" value="C:plasma membrane"/>
    <property type="evidence" value="ECO:0007669"/>
    <property type="project" value="Ensembl"/>
</dbReference>
<dbReference type="GO" id="GO:0004045">
    <property type="term" value="F:peptidyl-tRNA hydrolase activity"/>
    <property type="evidence" value="ECO:0000250"/>
    <property type="project" value="UniProtKB"/>
</dbReference>
<dbReference type="GO" id="GO:0016150">
    <property type="term" value="F:translation release factor activity, codon nonspecific"/>
    <property type="evidence" value="ECO:0000250"/>
    <property type="project" value="UniProtKB"/>
</dbReference>
<dbReference type="GO" id="GO:0032543">
    <property type="term" value="P:mitochondrial translation"/>
    <property type="evidence" value="ECO:0000303"/>
    <property type="project" value="ComplexPortal"/>
</dbReference>
<dbReference type="GO" id="GO:0070126">
    <property type="term" value="P:mitochondrial translational termination"/>
    <property type="evidence" value="ECO:0000250"/>
    <property type="project" value="UniProtKB"/>
</dbReference>
<dbReference type="GO" id="GO:0072344">
    <property type="term" value="P:rescue of stalled ribosome"/>
    <property type="evidence" value="ECO:0000250"/>
    <property type="project" value="UniProtKB"/>
</dbReference>
<dbReference type="FunFam" id="3.30.160.20:FF:000050">
    <property type="entry name" value="Peptidyl-tRNA hydrolase ICT1, mitochondrial"/>
    <property type="match status" value="1"/>
</dbReference>
<dbReference type="Gene3D" id="3.30.160.20">
    <property type="match status" value="1"/>
</dbReference>
<dbReference type="InterPro" id="IPR052104">
    <property type="entry name" value="Mito_Release_Factor_mL62"/>
</dbReference>
<dbReference type="InterPro" id="IPR000352">
    <property type="entry name" value="Pep_chain_release_fac_I"/>
</dbReference>
<dbReference type="PANTHER" id="PTHR11075:SF54">
    <property type="entry name" value="LARGE RIBOSOMAL SUBUNIT PROTEIN ML62"/>
    <property type="match status" value="1"/>
</dbReference>
<dbReference type="PANTHER" id="PTHR11075">
    <property type="entry name" value="PEPTIDE CHAIN RELEASE FACTOR"/>
    <property type="match status" value="1"/>
</dbReference>
<dbReference type="Pfam" id="PF00472">
    <property type="entry name" value="RF-1"/>
    <property type="match status" value="1"/>
</dbReference>
<dbReference type="SUPFAM" id="SSF110916">
    <property type="entry name" value="Peptidyl-tRNA hydrolase domain-like"/>
    <property type="match status" value="1"/>
</dbReference>
<comment type="function">
    <text evidence="1 3">Essential peptidyl-tRNA hydrolase component of the mitochondrial large ribosomal subunit (PubMed:20869366). Acts as a codon-independent translation release factor that has lost all stop codon specificity and directs the termination of translation in mitochondrion, possibly in case of abortive elongation. May be involved in the hydrolysis of peptidyl-tRNAs that have been prematurely terminated and thus in the recycling of stalled mitochondrial ribosomes (By similarity).</text>
</comment>
<comment type="catalytic activity">
    <reaction>
        <text>an N-acyl-L-alpha-aminoacyl-tRNA + H2O = an N-acyl-L-amino acid + a tRNA + H(+)</text>
        <dbReference type="Rhea" id="RHEA:54448"/>
        <dbReference type="Rhea" id="RHEA-COMP:10123"/>
        <dbReference type="Rhea" id="RHEA-COMP:13883"/>
        <dbReference type="ChEBI" id="CHEBI:15377"/>
        <dbReference type="ChEBI" id="CHEBI:15378"/>
        <dbReference type="ChEBI" id="CHEBI:59874"/>
        <dbReference type="ChEBI" id="CHEBI:78442"/>
        <dbReference type="ChEBI" id="CHEBI:138191"/>
        <dbReference type="EC" id="3.1.1.29"/>
    </reaction>
</comment>
<comment type="subunit">
    <text evidence="1">Component of the mitochondrial ribosome large subunit (39S) which comprises a 16S rRNA and about 50 distinct proteins.</text>
</comment>
<comment type="subcellular location">
    <subcellularLocation>
        <location evidence="1">Mitochondrion</location>
    </subcellularLocation>
</comment>
<comment type="alternative products">
    <event type="alternative splicing"/>
    <isoform>
        <id>Q8R035-1</id>
        <name>1</name>
        <sequence type="displayed"/>
    </isoform>
    <isoform>
        <id>Q8R035-2</id>
        <name>2</name>
        <sequence type="described" ref="VSP_014374"/>
    </isoform>
</comment>
<comment type="PTM">
    <text evidence="1">Methylation of glutamine in the GGQ triplet by HEMK1.</text>
</comment>
<comment type="similarity">
    <text evidence="5">Belongs to the prokaryotic/mitochondrial release factor family. Mitochondrion-specific ribosomal protein mL62 subfamily.</text>
</comment>
<comment type="caution">
    <text evidence="5">In contrast to other members of the family, lacks the regions that come into close contact with the mRNA in the ribosomal A-site and determine the STOP codon specificity, explaining the loss of codon specificity for translation release factor activity.</text>
</comment>
<accession>Q8R035</accession>
<accession>A2A6T2</accession>
<accession>A2A6T3</accession>
<accession>Q3TUL0</accession>
<accession>Q9CTK1</accession>
<accession>Q9D1R3</accession>